<evidence type="ECO:0000305" key="1"/>
<keyword id="KW-0194">Cyanelle</keyword>
<keyword id="KW-0934">Plastid</keyword>
<reference key="1">
    <citation type="journal article" date="1995" name="Plant Mol. Biol. Rep.">
        <title>Nucleotide sequence of the cyanelle DNA from Cyanophora paradoxa.</title>
        <authorList>
            <person name="Stirewalt V.L."/>
            <person name="Michalowski C.B."/>
            <person name="Loeffelhardt W."/>
            <person name="Bohnert H.J."/>
            <person name="Bryant D.A."/>
        </authorList>
    </citation>
    <scope>NUCLEOTIDE SEQUENCE [LARGE SCALE GENOMIC DNA]</scope>
    <source>
        <strain>UTEX LB 555 / Pringsheim</strain>
    </source>
</reference>
<reference key="2">
    <citation type="book" date="1997" name="Eukaryotism and symbiosis">
        <title>The complete sequence of the cyanelle genome of Cyanophora paradoxa: the genetic complexity of a primitive plastid.</title>
        <editorList>
            <person name="Schenk H.E.A."/>
            <person name="Herrmann R."/>
            <person name="Jeon K.W."/>
            <person name="Mueller N.E."/>
            <person name="Schwemmler W."/>
        </editorList>
        <authorList>
            <person name="Loeffelhardt W."/>
            <person name="Stirewalt V.L."/>
            <person name="Michalowski C.B."/>
            <person name="Annarella M."/>
            <person name="Farley J.Y."/>
            <person name="Schluchter W.M."/>
            <person name="Chung S."/>
            <person name="Newmann-Spallart C."/>
            <person name="Steiner J.M."/>
            <person name="Jakowitsch J."/>
            <person name="Bohnert H.J."/>
            <person name="Bryant D.A."/>
        </authorList>
    </citation>
    <scope>NUCLEOTIDE SEQUENCE [LARGE SCALE GENOMIC DNA]</scope>
    <source>
        <strain>UTEX LB 555 / Pringsheim</strain>
    </source>
</reference>
<feature type="chain" id="PRO_0000217352" description="Uncharacterized protein ycf36">
    <location>
        <begin position="1"/>
        <end position="159"/>
    </location>
</feature>
<geneLocation type="cyanelle"/>
<comment type="subcellular location">
    <subcellularLocation>
        <location>Plastid</location>
        <location>Cyanelle</location>
    </subcellularLocation>
</comment>
<comment type="similarity">
    <text evidence="1">Belongs to the ycf36 family.</text>
</comment>
<accession>P48276</accession>
<sequence>MCTFCPIPTEQQPLNEYQILNNSVLFNWPSQKLKIYFFYLFTIYSIGFLLTFLITFYNDLFIVHPVNIFVHGIIGGNFVLILDLLRLYLGWSYICQRLLSATVSYEESGWYDGQIWVKSSEVLIQDRLIGIYQVRPVLNRLKQTLGVVILILGFTLLIQ</sequence>
<protein>
    <recommendedName>
        <fullName>Uncharacterized protein ycf36</fullName>
    </recommendedName>
</protein>
<dbReference type="EMBL" id="U30821">
    <property type="protein sequence ID" value="AAA81242.1"/>
    <property type="molecule type" value="Genomic_DNA"/>
</dbReference>
<dbReference type="PIR" id="T06899">
    <property type="entry name" value="T06899"/>
</dbReference>
<dbReference type="RefSeq" id="NP_043211.1">
    <property type="nucleotide sequence ID" value="NC_001675.1"/>
</dbReference>
<dbReference type="GeneID" id="801531"/>
<dbReference type="GO" id="GO:0009842">
    <property type="term" value="C:cyanelle"/>
    <property type="evidence" value="ECO:0007669"/>
    <property type="project" value="UniProtKB-SubCell"/>
</dbReference>
<dbReference type="InterPro" id="IPR009631">
    <property type="entry name" value="CGLD27-like"/>
</dbReference>
<dbReference type="PANTHER" id="PTHR34214">
    <property type="match status" value="1"/>
</dbReference>
<dbReference type="PANTHER" id="PTHR34214:SF3">
    <property type="entry name" value="PROTEIN CONSERVED IN THE GREEN LINEAGE AND DIATOMS 27, CHLOROPLASTIC"/>
    <property type="match status" value="1"/>
</dbReference>
<dbReference type="Pfam" id="PF06799">
    <property type="entry name" value="CGLD27-like"/>
    <property type="match status" value="1"/>
</dbReference>
<proteinExistence type="inferred from homology"/>
<organism>
    <name type="scientific">Cyanophora paradoxa</name>
    <dbReference type="NCBI Taxonomy" id="2762"/>
    <lineage>
        <taxon>Eukaryota</taxon>
        <taxon>Glaucocystophyceae</taxon>
        <taxon>Cyanophoraceae</taxon>
        <taxon>Cyanophora</taxon>
    </lineage>
</organism>
<gene>
    <name type="primary">ycf36</name>
</gene>
<name>YCF36_CYAPA</name>